<sequence>MAAQVASGVGNLNLNSEGGAAAKNRPAQGSPENEARESDGEYDDDQGAPELGNTTAAKKKKKKTKKKKKCTSKVQTEPPRIILSSLFPNNQYPEGEIVEYQNENAYRTTNEEKRHLDRMNNDFLAEYRYAAEVHRQVRQYSQKAIKPGQTLTEIAEGIEESVRALTGHPGLEEGDNLRGGIAFPTGVNLNHCAAHYTPNAGNKMVLQYEDVMKVDFGVHINGRIVDSAFTIAFDPVYDNLLAAVKDATNTGIKQAGIDVRMSDIGAAIQEAMESYEVEIKGTSYPVKAIRNLNGHTIGRYEIHGGKNGKSVPIVKGGDQTKMEEGEVYAIETFGSTGRGYVRDDMETSHYAKIPDAPNVPLRLSSAKNLLNVITKNFGTLPFCRRYLDRLGQDKYLLGLNNLVANGIVDAYPPLCDVKGSYTAQFEHTILLRPNVKEIISRGDDY</sequence>
<reference key="1">
    <citation type="journal article" date="2011" name="PLoS Genet.">
        <title>Comparative genomic analysis of human fungal pathogens causing paracoccidioidomycosis.</title>
        <authorList>
            <person name="Desjardins C.A."/>
            <person name="Champion M.D."/>
            <person name="Holder J.W."/>
            <person name="Muszewska A."/>
            <person name="Goldberg J."/>
            <person name="Bailao A.M."/>
            <person name="Brigido M.M."/>
            <person name="Ferreira M.E."/>
            <person name="Garcia A.M."/>
            <person name="Grynberg M."/>
            <person name="Gujja S."/>
            <person name="Heiman D.I."/>
            <person name="Henn M.R."/>
            <person name="Kodira C.D."/>
            <person name="Leon-Narvaez H."/>
            <person name="Longo L.V.G."/>
            <person name="Ma L.-J."/>
            <person name="Malavazi I."/>
            <person name="Matsuo A.L."/>
            <person name="Morais F.V."/>
            <person name="Pereira M."/>
            <person name="Rodriguez-Brito S."/>
            <person name="Sakthikumar S."/>
            <person name="Salem-Izacc S.M."/>
            <person name="Sykes S.M."/>
            <person name="Teixeira M.M."/>
            <person name="Vallejo M.C."/>
            <person name="Walter M.E."/>
            <person name="Yandava C."/>
            <person name="Young S."/>
            <person name="Zeng Q."/>
            <person name="Zucker J."/>
            <person name="Felipe M.S."/>
            <person name="Goldman G.H."/>
            <person name="Haas B.J."/>
            <person name="McEwen J.G."/>
            <person name="Nino-Vega G."/>
            <person name="Puccia R."/>
            <person name="San-Blas G."/>
            <person name="Soares C.M."/>
            <person name="Birren B.W."/>
            <person name="Cuomo C.A."/>
        </authorList>
    </citation>
    <scope>NUCLEOTIDE SEQUENCE [LARGE SCALE GENOMIC DNA]</scope>
    <source>
        <strain>ATCC MYA-826 / Pb01</strain>
    </source>
</reference>
<proteinExistence type="inferred from homology"/>
<name>MAP2_PARBA</name>
<keyword id="KW-0031">Aminopeptidase</keyword>
<keyword id="KW-0963">Cytoplasm</keyword>
<keyword id="KW-0378">Hydrolase</keyword>
<keyword id="KW-0479">Metal-binding</keyword>
<keyword id="KW-0645">Protease</keyword>
<keyword id="KW-1185">Reference proteome</keyword>
<accession>C1HAB2</accession>
<feature type="chain" id="PRO_0000407659" description="Methionine aminopeptidase 2">
    <location>
        <begin position="1"/>
        <end position="445"/>
    </location>
</feature>
<feature type="region of interest" description="Disordered" evidence="2">
    <location>
        <begin position="1"/>
        <end position="76"/>
    </location>
</feature>
<feature type="compositionally biased region" description="Basic residues" evidence="2">
    <location>
        <begin position="57"/>
        <end position="71"/>
    </location>
</feature>
<feature type="binding site" evidence="1">
    <location>
        <position position="195"/>
    </location>
    <ligand>
        <name>substrate</name>
    </ligand>
</feature>
<feature type="binding site" evidence="1">
    <location>
        <position position="215"/>
    </location>
    <ligand>
        <name>a divalent metal cation</name>
        <dbReference type="ChEBI" id="CHEBI:60240"/>
        <label>1</label>
    </ligand>
</feature>
<feature type="binding site" evidence="1">
    <location>
        <position position="226"/>
    </location>
    <ligand>
        <name>a divalent metal cation</name>
        <dbReference type="ChEBI" id="CHEBI:60240"/>
        <label>1</label>
    </ligand>
</feature>
<feature type="binding site" evidence="1">
    <location>
        <position position="226"/>
    </location>
    <ligand>
        <name>a divalent metal cation</name>
        <dbReference type="ChEBI" id="CHEBI:60240"/>
        <label>2</label>
        <note>catalytic</note>
    </ligand>
</feature>
<feature type="binding site" evidence="1">
    <location>
        <position position="295"/>
    </location>
    <ligand>
        <name>a divalent metal cation</name>
        <dbReference type="ChEBI" id="CHEBI:60240"/>
        <label>2</label>
        <note>catalytic</note>
    </ligand>
</feature>
<feature type="binding site" evidence="1">
    <location>
        <position position="303"/>
    </location>
    <ligand>
        <name>substrate</name>
    </ligand>
</feature>
<feature type="binding site" evidence="1">
    <location>
        <position position="331"/>
    </location>
    <ligand>
        <name>a divalent metal cation</name>
        <dbReference type="ChEBI" id="CHEBI:60240"/>
        <label>2</label>
        <note>catalytic</note>
    </ligand>
</feature>
<feature type="binding site" evidence="1">
    <location>
        <position position="426"/>
    </location>
    <ligand>
        <name>a divalent metal cation</name>
        <dbReference type="ChEBI" id="CHEBI:60240"/>
        <label>1</label>
    </ligand>
</feature>
<feature type="binding site" evidence="1">
    <location>
        <position position="426"/>
    </location>
    <ligand>
        <name>a divalent metal cation</name>
        <dbReference type="ChEBI" id="CHEBI:60240"/>
        <label>2</label>
        <note>catalytic</note>
    </ligand>
</feature>
<protein>
    <recommendedName>
        <fullName evidence="1">Methionine aminopeptidase 2</fullName>
        <shortName evidence="1">MAP 2</shortName>
        <shortName evidence="1">MetAP 2</shortName>
        <ecNumber evidence="1">3.4.11.18</ecNumber>
    </recommendedName>
    <alternativeName>
        <fullName evidence="1">Peptidase M</fullName>
    </alternativeName>
</protein>
<dbReference type="EC" id="3.4.11.18" evidence="1"/>
<dbReference type="EMBL" id="KN294017">
    <property type="protein sequence ID" value="EEH37285.2"/>
    <property type="status" value="ALT_SEQ"/>
    <property type="molecule type" value="Genomic_DNA"/>
</dbReference>
<dbReference type="RefSeq" id="XP_015700742.1">
    <property type="nucleotide sequence ID" value="XM_015846259.1"/>
</dbReference>
<dbReference type="SMR" id="C1HAB2"/>
<dbReference type="STRING" id="502779.C1HAB2"/>
<dbReference type="GeneID" id="9093508"/>
<dbReference type="KEGG" id="pbl:PAAG_07566"/>
<dbReference type="eggNOG" id="KOG2775">
    <property type="taxonomic scope" value="Eukaryota"/>
</dbReference>
<dbReference type="HOGENOM" id="CLU_015857_7_1_1"/>
<dbReference type="OrthoDB" id="7848262at2759"/>
<dbReference type="Proteomes" id="UP000002059">
    <property type="component" value="Partially assembled WGS sequence"/>
</dbReference>
<dbReference type="GO" id="GO:0005737">
    <property type="term" value="C:cytoplasm"/>
    <property type="evidence" value="ECO:0007669"/>
    <property type="project" value="UniProtKB-SubCell"/>
</dbReference>
<dbReference type="GO" id="GO:0004239">
    <property type="term" value="F:initiator methionyl aminopeptidase activity"/>
    <property type="evidence" value="ECO:0007669"/>
    <property type="project" value="UniProtKB-UniRule"/>
</dbReference>
<dbReference type="GO" id="GO:0046872">
    <property type="term" value="F:metal ion binding"/>
    <property type="evidence" value="ECO:0007669"/>
    <property type="project" value="UniProtKB-UniRule"/>
</dbReference>
<dbReference type="GO" id="GO:0070006">
    <property type="term" value="F:metalloaminopeptidase activity"/>
    <property type="evidence" value="ECO:0007669"/>
    <property type="project" value="UniProtKB-UniRule"/>
</dbReference>
<dbReference type="GO" id="GO:0006508">
    <property type="term" value="P:proteolysis"/>
    <property type="evidence" value="ECO:0007669"/>
    <property type="project" value="UniProtKB-KW"/>
</dbReference>
<dbReference type="CDD" id="cd01088">
    <property type="entry name" value="MetAP2"/>
    <property type="match status" value="1"/>
</dbReference>
<dbReference type="Gene3D" id="3.90.230.10">
    <property type="entry name" value="Creatinase/methionine aminopeptidase superfamily"/>
    <property type="match status" value="1"/>
</dbReference>
<dbReference type="Gene3D" id="1.10.10.10">
    <property type="entry name" value="Winged helix-like DNA-binding domain superfamily/Winged helix DNA-binding domain"/>
    <property type="match status" value="1"/>
</dbReference>
<dbReference type="HAMAP" id="MF_03175">
    <property type="entry name" value="MetAP_2_euk"/>
    <property type="match status" value="1"/>
</dbReference>
<dbReference type="InterPro" id="IPR036005">
    <property type="entry name" value="Creatinase/aminopeptidase-like"/>
</dbReference>
<dbReference type="InterPro" id="IPR050247">
    <property type="entry name" value="Met_Aminopeptidase_Type2"/>
</dbReference>
<dbReference type="InterPro" id="IPR000994">
    <property type="entry name" value="Pept_M24"/>
</dbReference>
<dbReference type="InterPro" id="IPR001714">
    <property type="entry name" value="Pept_M24_MAP"/>
</dbReference>
<dbReference type="InterPro" id="IPR002468">
    <property type="entry name" value="Pept_M24A_MAP2"/>
</dbReference>
<dbReference type="InterPro" id="IPR018349">
    <property type="entry name" value="Pept_M24A_MAP2_BS"/>
</dbReference>
<dbReference type="InterPro" id="IPR036388">
    <property type="entry name" value="WH-like_DNA-bd_sf"/>
</dbReference>
<dbReference type="InterPro" id="IPR036390">
    <property type="entry name" value="WH_DNA-bd_sf"/>
</dbReference>
<dbReference type="NCBIfam" id="TIGR00501">
    <property type="entry name" value="met_pdase_II"/>
    <property type="match status" value="1"/>
</dbReference>
<dbReference type="PANTHER" id="PTHR45777">
    <property type="entry name" value="METHIONINE AMINOPEPTIDASE 2"/>
    <property type="match status" value="1"/>
</dbReference>
<dbReference type="PANTHER" id="PTHR45777:SF2">
    <property type="entry name" value="METHIONINE AMINOPEPTIDASE 2"/>
    <property type="match status" value="1"/>
</dbReference>
<dbReference type="Pfam" id="PF00557">
    <property type="entry name" value="Peptidase_M24"/>
    <property type="match status" value="1"/>
</dbReference>
<dbReference type="PRINTS" id="PR00599">
    <property type="entry name" value="MAPEPTIDASE"/>
</dbReference>
<dbReference type="SUPFAM" id="SSF55920">
    <property type="entry name" value="Creatinase/aminopeptidase"/>
    <property type="match status" value="1"/>
</dbReference>
<dbReference type="SUPFAM" id="SSF46785">
    <property type="entry name" value="Winged helix' DNA-binding domain"/>
    <property type="match status" value="1"/>
</dbReference>
<dbReference type="PROSITE" id="PS01202">
    <property type="entry name" value="MAP_2"/>
    <property type="match status" value="1"/>
</dbReference>
<gene>
    <name type="ORF">PAAG_07566</name>
</gene>
<evidence type="ECO:0000255" key="1">
    <source>
        <dbReference type="HAMAP-Rule" id="MF_03175"/>
    </source>
</evidence>
<evidence type="ECO:0000256" key="2">
    <source>
        <dbReference type="SAM" id="MobiDB-lite"/>
    </source>
</evidence>
<evidence type="ECO:0000305" key="3"/>
<comment type="function">
    <text evidence="1">Cotranslationally removes the N-terminal methionine from nascent proteins. The N-terminal methionine is often cleaved when the second residue in the primary sequence is small and uncharged (Met-Ala-, Cys, Gly, Pro, Ser, Thr, or Val).</text>
</comment>
<comment type="catalytic activity">
    <reaction evidence="1">
        <text>Release of N-terminal amino acids, preferentially methionine, from peptides and arylamides.</text>
        <dbReference type="EC" id="3.4.11.18"/>
    </reaction>
</comment>
<comment type="cofactor">
    <cofactor evidence="1">
        <name>Co(2+)</name>
        <dbReference type="ChEBI" id="CHEBI:48828"/>
    </cofactor>
    <cofactor evidence="1">
        <name>Zn(2+)</name>
        <dbReference type="ChEBI" id="CHEBI:29105"/>
    </cofactor>
    <cofactor evidence="1">
        <name>Mn(2+)</name>
        <dbReference type="ChEBI" id="CHEBI:29035"/>
    </cofactor>
    <cofactor evidence="1">
        <name>Fe(2+)</name>
        <dbReference type="ChEBI" id="CHEBI:29033"/>
    </cofactor>
    <text evidence="1">Binds 2 divalent metal cations per subunit. Has a high-affinity and a low affinity metal-binding site. The true nature of the physiological cofactor is under debate. The enzyme is active with cobalt, zinc, manganese or divalent iron ions. Most likely, methionine aminopeptidases function as mononuclear Fe(2+)-metalloproteases under physiological conditions, and the catalytically relevant metal-binding site has been assigned to the histidine-containing high-affinity site.</text>
</comment>
<comment type="subcellular location">
    <subcellularLocation>
        <location evidence="1">Cytoplasm</location>
    </subcellularLocation>
</comment>
<comment type="similarity">
    <text evidence="1">Belongs to the peptidase M24A family. Methionine aminopeptidase eukaryotic type 2 subfamily.</text>
</comment>
<comment type="sequence caution" evidence="3">
    <conflict type="erroneous gene model prediction">
        <sequence resource="EMBL-CDS" id="EEH37285"/>
    </conflict>
</comment>
<organism>
    <name type="scientific">Paracoccidioides lutzii (strain ATCC MYA-826 / Pb01)</name>
    <name type="common">Paracoccidioides brasiliensis</name>
    <dbReference type="NCBI Taxonomy" id="502779"/>
    <lineage>
        <taxon>Eukaryota</taxon>
        <taxon>Fungi</taxon>
        <taxon>Dikarya</taxon>
        <taxon>Ascomycota</taxon>
        <taxon>Pezizomycotina</taxon>
        <taxon>Eurotiomycetes</taxon>
        <taxon>Eurotiomycetidae</taxon>
        <taxon>Onygenales</taxon>
        <taxon>Ajellomycetaceae</taxon>
        <taxon>Paracoccidioides</taxon>
    </lineage>
</organism>